<feature type="chain" id="PRO_0000142167" description="Imidazole glycerol phosphate synthase subunit HisF">
    <location>
        <begin position="1"/>
        <end position="265"/>
    </location>
</feature>
<feature type="active site" evidence="1">
    <location>
        <position position="11"/>
    </location>
</feature>
<feature type="active site" evidence="1">
    <location>
        <position position="130"/>
    </location>
</feature>
<name>HIS6_IDILO</name>
<evidence type="ECO:0000255" key="1">
    <source>
        <dbReference type="HAMAP-Rule" id="MF_01013"/>
    </source>
</evidence>
<gene>
    <name evidence="1" type="primary">hisF</name>
    <name type="ordered locus">IL1840</name>
</gene>
<comment type="function">
    <text evidence="1">IGPS catalyzes the conversion of PRFAR and glutamine to IGP, AICAR and glutamate. The HisF subunit catalyzes the cyclization activity that produces IGP and AICAR from PRFAR using the ammonia provided by the HisH subunit.</text>
</comment>
<comment type="catalytic activity">
    <reaction evidence="1">
        <text>5-[(5-phospho-1-deoxy-D-ribulos-1-ylimino)methylamino]-1-(5-phospho-beta-D-ribosyl)imidazole-4-carboxamide + L-glutamine = D-erythro-1-(imidazol-4-yl)glycerol 3-phosphate + 5-amino-1-(5-phospho-beta-D-ribosyl)imidazole-4-carboxamide + L-glutamate + H(+)</text>
        <dbReference type="Rhea" id="RHEA:24793"/>
        <dbReference type="ChEBI" id="CHEBI:15378"/>
        <dbReference type="ChEBI" id="CHEBI:29985"/>
        <dbReference type="ChEBI" id="CHEBI:58278"/>
        <dbReference type="ChEBI" id="CHEBI:58359"/>
        <dbReference type="ChEBI" id="CHEBI:58475"/>
        <dbReference type="ChEBI" id="CHEBI:58525"/>
        <dbReference type="EC" id="4.3.2.10"/>
    </reaction>
</comment>
<comment type="pathway">
    <text evidence="1">Amino-acid biosynthesis; L-histidine biosynthesis; L-histidine from 5-phospho-alpha-D-ribose 1-diphosphate: step 5/9.</text>
</comment>
<comment type="subunit">
    <text evidence="1">Heterodimer of HisH and HisF.</text>
</comment>
<comment type="subcellular location">
    <subcellularLocation>
        <location evidence="1">Cytoplasm</location>
    </subcellularLocation>
</comment>
<comment type="similarity">
    <text evidence="1">Belongs to the HisA/HisF family.</text>
</comment>
<organism>
    <name type="scientific">Idiomarina loihiensis (strain ATCC BAA-735 / DSM 15497 / L2-TR)</name>
    <dbReference type="NCBI Taxonomy" id="283942"/>
    <lineage>
        <taxon>Bacteria</taxon>
        <taxon>Pseudomonadati</taxon>
        <taxon>Pseudomonadota</taxon>
        <taxon>Gammaproteobacteria</taxon>
        <taxon>Alteromonadales</taxon>
        <taxon>Idiomarinaceae</taxon>
        <taxon>Idiomarina</taxon>
    </lineage>
</organism>
<sequence length="265" mass="28886">MLAKRVIPCLDVRDGQVVKGVKFRNHEIIGDILPLAKRYAESGADELVFYDITASADGRTVDKSWVERVAREINIPFTVAGGIRSVEHAQTMLSMGADKISINSPALLNPNLINTLVEEFGQQCIVIGIDSFYNEQSGEYEVHQFTGDESKSHKSAWQTKDWLQEVISRGAGEIVLNCMNQDGVRQGYDIAQLSALRGHCSVPLIASGGAGEIQHFVDAFQKAQVDGALAASVFHKNLFSISEVKAAMAANNIAVRPIEALQETT</sequence>
<keyword id="KW-0028">Amino-acid biosynthesis</keyword>
<keyword id="KW-0963">Cytoplasm</keyword>
<keyword id="KW-0368">Histidine biosynthesis</keyword>
<keyword id="KW-0456">Lyase</keyword>
<keyword id="KW-1185">Reference proteome</keyword>
<accession>Q5QWQ5</accession>
<dbReference type="EC" id="4.3.2.10" evidence="1"/>
<dbReference type="EMBL" id="AE017340">
    <property type="protein sequence ID" value="AAV82672.1"/>
    <property type="molecule type" value="Genomic_DNA"/>
</dbReference>
<dbReference type="RefSeq" id="WP_011235072.1">
    <property type="nucleotide sequence ID" value="NC_006512.1"/>
</dbReference>
<dbReference type="SMR" id="Q5QWQ5"/>
<dbReference type="STRING" id="283942.IL1840"/>
<dbReference type="GeneID" id="41337024"/>
<dbReference type="KEGG" id="ilo:IL1840"/>
<dbReference type="eggNOG" id="COG0107">
    <property type="taxonomic scope" value="Bacteria"/>
</dbReference>
<dbReference type="HOGENOM" id="CLU_048577_4_0_6"/>
<dbReference type="OrthoDB" id="9781903at2"/>
<dbReference type="UniPathway" id="UPA00031">
    <property type="reaction ID" value="UER00010"/>
</dbReference>
<dbReference type="Proteomes" id="UP000001171">
    <property type="component" value="Chromosome"/>
</dbReference>
<dbReference type="GO" id="GO:0005737">
    <property type="term" value="C:cytoplasm"/>
    <property type="evidence" value="ECO:0007669"/>
    <property type="project" value="UniProtKB-SubCell"/>
</dbReference>
<dbReference type="GO" id="GO:0000107">
    <property type="term" value="F:imidazoleglycerol-phosphate synthase activity"/>
    <property type="evidence" value="ECO:0007669"/>
    <property type="project" value="UniProtKB-UniRule"/>
</dbReference>
<dbReference type="GO" id="GO:0016829">
    <property type="term" value="F:lyase activity"/>
    <property type="evidence" value="ECO:0007669"/>
    <property type="project" value="UniProtKB-KW"/>
</dbReference>
<dbReference type="GO" id="GO:0000105">
    <property type="term" value="P:L-histidine biosynthetic process"/>
    <property type="evidence" value="ECO:0007669"/>
    <property type="project" value="UniProtKB-UniRule"/>
</dbReference>
<dbReference type="CDD" id="cd04731">
    <property type="entry name" value="HisF"/>
    <property type="match status" value="1"/>
</dbReference>
<dbReference type="FunFam" id="3.20.20.70:FF:000006">
    <property type="entry name" value="Imidazole glycerol phosphate synthase subunit HisF"/>
    <property type="match status" value="1"/>
</dbReference>
<dbReference type="Gene3D" id="3.20.20.70">
    <property type="entry name" value="Aldolase class I"/>
    <property type="match status" value="1"/>
</dbReference>
<dbReference type="HAMAP" id="MF_01013">
    <property type="entry name" value="HisF"/>
    <property type="match status" value="1"/>
</dbReference>
<dbReference type="InterPro" id="IPR013785">
    <property type="entry name" value="Aldolase_TIM"/>
</dbReference>
<dbReference type="InterPro" id="IPR006062">
    <property type="entry name" value="His_biosynth"/>
</dbReference>
<dbReference type="InterPro" id="IPR004651">
    <property type="entry name" value="HisF"/>
</dbReference>
<dbReference type="InterPro" id="IPR050064">
    <property type="entry name" value="IGPS_HisA/HisF"/>
</dbReference>
<dbReference type="InterPro" id="IPR011060">
    <property type="entry name" value="RibuloseP-bd_barrel"/>
</dbReference>
<dbReference type="NCBIfam" id="TIGR00735">
    <property type="entry name" value="hisF"/>
    <property type="match status" value="1"/>
</dbReference>
<dbReference type="PANTHER" id="PTHR21235:SF2">
    <property type="entry name" value="IMIDAZOLE GLYCEROL PHOSPHATE SYNTHASE HISHF"/>
    <property type="match status" value="1"/>
</dbReference>
<dbReference type="PANTHER" id="PTHR21235">
    <property type="entry name" value="IMIDAZOLE GLYCEROL PHOSPHATE SYNTHASE SUBUNIT HISF/H IGP SYNTHASE SUBUNIT HISF/H"/>
    <property type="match status" value="1"/>
</dbReference>
<dbReference type="Pfam" id="PF00977">
    <property type="entry name" value="His_biosynth"/>
    <property type="match status" value="1"/>
</dbReference>
<dbReference type="SUPFAM" id="SSF51366">
    <property type="entry name" value="Ribulose-phoshate binding barrel"/>
    <property type="match status" value="1"/>
</dbReference>
<protein>
    <recommendedName>
        <fullName evidence="1">Imidazole glycerol phosphate synthase subunit HisF</fullName>
        <ecNumber evidence="1">4.3.2.10</ecNumber>
    </recommendedName>
    <alternativeName>
        <fullName evidence="1">IGP synthase cyclase subunit</fullName>
    </alternativeName>
    <alternativeName>
        <fullName evidence="1">IGP synthase subunit HisF</fullName>
    </alternativeName>
    <alternativeName>
        <fullName evidence="1">ImGP synthase subunit HisF</fullName>
        <shortName evidence="1">IGPS subunit HisF</shortName>
    </alternativeName>
</protein>
<reference key="1">
    <citation type="journal article" date="2004" name="Proc. Natl. Acad. Sci. U.S.A.">
        <title>Genome sequence of the deep-sea gamma-proteobacterium Idiomarina loihiensis reveals amino acid fermentation as a source of carbon and energy.</title>
        <authorList>
            <person name="Hou S."/>
            <person name="Saw J.H."/>
            <person name="Lee K.S."/>
            <person name="Freitas T.A."/>
            <person name="Belisle C."/>
            <person name="Kawarabayasi Y."/>
            <person name="Donachie S.P."/>
            <person name="Pikina A."/>
            <person name="Galperin M.Y."/>
            <person name="Koonin E.V."/>
            <person name="Makarova K.S."/>
            <person name="Omelchenko M.V."/>
            <person name="Sorokin A."/>
            <person name="Wolf Y.I."/>
            <person name="Li Q.X."/>
            <person name="Keum Y.S."/>
            <person name="Campbell S."/>
            <person name="Denery J."/>
            <person name="Aizawa S."/>
            <person name="Shibata S."/>
            <person name="Malahoff A."/>
            <person name="Alam M."/>
        </authorList>
    </citation>
    <scope>NUCLEOTIDE SEQUENCE [LARGE SCALE GENOMIC DNA]</scope>
    <source>
        <strain>ATCC BAA-735 / DSM 15497 / L2-TR</strain>
    </source>
</reference>
<proteinExistence type="inferred from homology"/>